<name>AZOR_PARP8</name>
<organism>
    <name type="scientific">Paraburkholderia phymatum (strain DSM 17167 / CIP 108236 / LMG 21445 / STM815)</name>
    <name type="common">Burkholderia phymatum</name>
    <dbReference type="NCBI Taxonomy" id="391038"/>
    <lineage>
        <taxon>Bacteria</taxon>
        <taxon>Pseudomonadati</taxon>
        <taxon>Pseudomonadota</taxon>
        <taxon>Betaproteobacteria</taxon>
        <taxon>Burkholderiales</taxon>
        <taxon>Burkholderiaceae</taxon>
        <taxon>Paraburkholderia</taxon>
    </lineage>
</organism>
<protein>
    <recommendedName>
        <fullName evidence="1">FMN-dependent NADH:quinone oxidoreductase</fullName>
        <ecNumber evidence="1">1.6.5.-</ecNumber>
    </recommendedName>
    <alternativeName>
        <fullName evidence="1">Azo-dye reductase</fullName>
    </alternativeName>
    <alternativeName>
        <fullName evidence="1">FMN-dependent NADH-azo compound oxidoreductase</fullName>
    </alternativeName>
    <alternativeName>
        <fullName evidence="1">FMN-dependent NADH-azoreductase</fullName>
        <ecNumber evidence="1">1.7.1.17</ecNumber>
    </alternativeName>
</protein>
<dbReference type="EC" id="1.6.5.-" evidence="1"/>
<dbReference type="EC" id="1.7.1.17" evidence="1"/>
<dbReference type="EMBL" id="CP001043">
    <property type="protein sequence ID" value="ACC71876.1"/>
    <property type="molecule type" value="Genomic_DNA"/>
</dbReference>
<dbReference type="RefSeq" id="WP_012402075.1">
    <property type="nucleotide sequence ID" value="NC_010622.1"/>
</dbReference>
<dbReference type="SMR" id="B2JHJ1"/>
<dbReference type="STRING" id="391038.Bphy_2704"/>
<dbReference type="KEGG" id="bph:Bphy_2704"/>
<dbReference type="eggNOG" id="COG1182">
    <property type="taxonomic scope" value="Bacteria"/>
</dbReference>
<dbReference type="HOGENOM" id="CLU_088964_0_0_4"/>
<dbReference type="OrthoDB" id="9787136at2"/>
<dbReference type="Proteomes" id="UP000001192">
    <property type="component" value="Chromosome 1"/>
</dbReference>
<dbReference type="GO" id="GO:0009055">
    <property type="term" value="F:electron transfer activity"/>
    <property type="evidence" value="ECO:0007669"/>
    <property type="project" value="UniProtKB-UniRule"/>
</dbReference>
<dbReference type="GO" id="GO:0010181">
    <property type="term" value="F:FMN binding"/>
    <property type="evidence" value="ECO:0007669"/>
    <property type="project" value="UniProtKB-UniRule"/>
</dbReference>
<dbReference type="GO" id="GO:0016652">
    <property type="term" value="F:oxidoreductase activity, acting on NAD(P)H as acceptor"/>
    <property type="evidence" value="ECO:0007669"/>
    <property type="project" value="UniProtKB-UniRule"/>
</dbReference>
<dbReference type="GO" id="GO:0016655">
    <property type="term" value="F:oxidoreductase activity, acting on NAD(P)H, quinone or similar compound as acceptor"/>
    <property type="evidence" value="ECO:0007669"/>
    <property type="project" value="InterPro"/>
</dbReference>
<dbReference type="Gene3D" id="3.40.50.360">
    <property type="match status" value="1"/>
</dbReference>
<dbReference type="HAMAP" id="MF_01216">
    <property type="entry name" value="Azoreductase_type1"/>
    <property type="match status" value="1"/>
</dbReference>
<dbReference type="InterPro" id="IPR003680">
    <property type="entry name" value="Flavodoxin_fold"/>
</dbReference>
<dbReference type="InterPro" id="IPR029039">
    <property type="entry name" value="Flavoprotein-like_sf"/>
</dbReference>
<dbReference type="InterPro" id="IPR050104">
    <property type="entry name" value="FMN-dep_NADH:Q_OxRdtase_AzoR1"/>
</dbReference>
<dbReference type="InterPro" id="IPR023048">
    <property type="entry name" value="NADH:quinone_OxRdtase_FMN_depd"/>
</dbReference>
<dbReference type="PANTHER" id="PTHR43741">
    <property type="entry name" value="FMN-DEPENDENT NADH-AZOREDUCTASE 1"/>
    <property type="match status" value="1"/>
</dbReference>
<dbReference type="PANTHER" id="PTHR43741:SF2">
    <property type="entry name" value="FMN-DEPENDENT NADH:QUINONE OXIDOREDUCTASE"/>
    <property type="match status" value="1"/>
</dbReference>
<dbReference type="Pfam" id="PF02525">
    <property type="entry name" value="Flavodoxin_2"/>
    <property type="match status" value="1"/>
</dbReference>
<dbReference type="SUPFAM" id="SSF52218">
    <property type="entry name" value="Flavoproteins"/>
    <property type="match status" value="1"/>
</dbReference>
<feature type="chain" id="PRO_1000138968" description="FMN-dependent NADH:quinone oxidoreductase">
    <location>
        <begin position="1"/>
        <end position="198"/>
    </location>
</feature>
<feature type="binding site" evidence="1">
    <location>
        <position position="10"/>
    </location>
    <ligand>
        <name>FMN</name>
        <dbReference type="ChEBI" id="CHEBI:58210"/>
    </ligand>
</feature>
<reference key="1">
    <citation type="journal article" date="2014" name="Stand. Genomic Sci.">
        <title>Complete genome sequence of Burkholderia phymatum STM815(T), a broad host range and efficient nitrogen-fixing symbiont of Mimosa species.</title>
        <authorList>
            <person name="Moulin L."/>
            <person name="Klonowska A."/>
            <person name="Caroline B."/>
            <person name="Booth K."/>
            <person name="Vriezen J.A."/>
            <person name="Melkonian R."/>
            <person name="James E.K."/>
            <person name="Young J.P."/>
            <person name="Bena G."/>
            <person name="Hauser L."/>
            <person name="Land M."/>
            <person name="Kyrpides N."/>
            <person name="Bruce D."/>
            <person name="Chain P."/>
            <person name="Copeland A."/>
            <person name="Pitluck S."/>
            <person name="Woyke T."/>
            <person name="Lizotte-Waniewski M."/>
            <person name="Bristow J."/>
            <person name="Riley M."/>
        </authorList>
    </citation>
    <scope>NUCLEOTIDE SEQUENCE [LARGE SCALE GENOMIC DNA]</scope>
    <source>
        <strain>DSM 17167 / CIP 108236 / LMG 21445 / STM815</strain>
    </source>
</reference>
<accession>B2JHJ1</accession>
<evidence type="ECO:0000255" key="1">
    <source>
        <dbReference type="HAMAP-Rule" id="MF_01216"/>
    </source>
</evidence>
<gene>
    <name evidence="1" type="primary">azoR</name>
    <name type="ordered locus">Bphy_2704</name>
</gene>
<comment type="function">
    <text evidence="1">Quinone reductase that provides resistance to thiol-specific stress caused by electrophilic quinones.</text>
</comment>
<comment type="function">
    <text evidence="1">Also exhibits azoreductase activity. Catalyzes the reductive cleavage of the azo bond in aromatic azo compounds to the corresponding amines.</text>
</comment>
<comment type="catalytic activity">
    <reaction evidence="1">
        <text>2 a quinone + NADH + H(+) = 2 a 1,4-benzosemiquinone + NAD(+)</text>
        <dbReference type="Rhea" id="RHEA:65952"/>
        <dbReference type="ChEBI" id="CHEBI:15378"/>
        <dbReference type="ChEBI" id="CHEBI:57540"/>
        <dbReference type="ChEBI" id="CHEBI:57945"/>
        <dbReference type="ChEBI" id="CHEBI:132124"/>
        <dbReference type="ChEBI" id="CHEBI:134225"/>
    </reaction>
</comment>
<comment type="catalytic activity">
    <reaction evidence="1">
        <text>N,N-dimethyl-1,4-phenylenediamine + anthranilate + 2 NAD(+) = 2-(4-dimethylaminophenyl)diazenylbenzoate + 2 NADH + 2 H(+)</text>
        <dbReference type="Rhea" id="RHEA:55872"/>
        <dbReference type="ChEBI" id="CHEBI:15378"/>
        <dbReference type="ChEBI" id="CHEBI:15783"/>
        <dbReference type="ChEBI" id="CHEBI:16567"/>
        <dbReference type="ChEBI" id="CHEBI:57540"/>
        <dbReference type="ChEBI" id="CHEBI:57945"/>
        <dbReference type="ChEBI" id="CHEBI:71579"/>
        <dbReference type="EC" id="1.7.1.17"/>
    </reaction>
</comment>
<comment type="cofactor">
    <cofactor evidence="1">
        <name>FMN</name>
        <dbReference type="ChEBI" id="CHEBI:58210"/>
    </cofactor>
    <text evidence="1">Binds 1 FMN per subunit.</text>
</comment>
<comment type="subunit">
    <text evidence="1">Homodimer.</text>
</comment>
<comment type="similarity">
    <text evidence="1">Belongs to the azoreductase type 1 family.</text>
</comment>
<proteinExistence type="inferred from homology"/>
<sequence length="198" mass="20682">MTTILQINSSARSQGAQSTLLANELTAKLQQSNPGAQVVVRNLHEDALPHLDDAILGAFFTPAEQRTAEQQAIAARSEALIAELQAADIVVIGAPLYNFGISSQLKTYFDFIARAGITFKYGANGPEGLVKGKKVFVVSARGGKYAGTPGDSQTPYLTTFLGFLGMTDVSFIYAEGLNMGPDAASAALAGAREAIAAA</sequence>
<keyword id="KW-0285">Flavoprotein</keyword>
<keyword id="KW-0288">FMN</keyword>
<keyword id="KW-0520">NAD</keyword>
<keyword id="KW-0560">Oxidoreductase</keyword>
<keyword id="KW-1185">Reference proteome</keyword>